<reference key="1">
    <citation type="journal article" date="1995" name="J. Bacteriol.">
        <title>Genetic and molecular characterization of the polar flagellum of Vibrio parahaemolyticus.</title>
        <authorList>
            <person name="McCarter L.L."/>
        </authorList>
    </citation>
    <scope>NUCLEOTIDE SEQUENCE [GENOMIC DNA]</scope>
    <source>
        <strain>BB22</strain>
    </source>
</reference>
<reference key="2">
    <citation type="journal article" date="2003" name="Lancet">
        <title>Genome sequence of Vibrio parahaemolyticus: a pathogenic mechanism distinct from that of V. cholerae.</title>
        <authorList>
            <person name="Makino K."/>
            <person name="Oshima K."/>
            <person name="Kurokawa K."/>
            <person name="Yokoyama K."/>
            <person name="Uda T."/>
            <person name="Tagomori K."/>
            <person name="Iijima Y."/>
            <person name="Najima M."/>
            <person name="Nakano M."/>
            <person name="Yamashita A."/>
            <person name="Kubota Y."/>
            <person name="Kimura S."/>
            <person name="Yasunaga T."/>
            <person name="Honda T."/>
            <person name="Shinagawa H."/>
            <person name="Hattori M."/>
            <person name="Iida T."/>
        </authorList>
    </citation>
    <scope>NUCLEOTIDE SEQUENCE [LARGE SCALE GENOMIC DNA]</scope>
    <source>
        <strain>RIMD 2210633</strain>
    </source>
</reference>
<proteinExistence type="predicted"/>
<evidence type="ECO:0000256" key="1">
    <source>
        <dbReference type="SAM" id="MobiDB-lite"/>
    </source>
</evidence>
<evidence type="ECO:0000305" key="2"/>
<protein>
    <recommendedName>
        <fullName>Protein FlaG</fullName>
    </recommendedName>
</protein>
<comment type="similarity">
    <text evidence="2">To FlaG in other Vibrio species.</text>
</comment>
<name>FLAG_VIBPA</name>
<gene>
    <name type="primary">flaG</name>
    <name type="ordered locus">VP2257</name>
</gene>
<accession>Q56704</accession>
<feature type="chain" id="PRO_0000087277" description="Protein FlaG">
    <location>
        <begin position="1"/>
        <end position="144"/>
    </location>
</feature>
<feature type="region of interest" description="Disordered" evidence="1">
    <location>
        <begin position="11"/>
        <end position="51"/>
    </location>
</feature>
<feature type="compositionally biased region" description="Polar residues" evidence="1">
    <location>
        <begin position="11"/>
        <end position="41"/>
    </location>
</feature>
<feature type="sequence conflict" description="In Ref. 1; AAC27802." evidence="2" ref="1">
    <original>F</original>
    <variation>S</variation>
    <location>
        <position position="5"/>
    </location>
</feature>
<feature type="sequence conflict" description="In Ref. 1; AAC27802." evidence="2" ref="1">
    <original>A</original>
    <variation>T</variation>
    <location>
        <position position="109"/>
    </location>
</feature>
<organism>
    <name type="scientific">Vibrio parahaemolyticus serotype O3:K6 (strain RIMD 2210633)</name>
    <dbReference type="NCBI Taxonomy" id="223926"/>
    <lineage>
        <taxon>Bacteria</taxon>
        <taxon>Pseudomonadati</taxon>
        <taxon>Pseudomonadota</taxon>
        <taxon>Gammaproteobacteria</taxon>
        <taxon>Vibrionales</taxon>
        <taxon>Vibrionaceae</taxon>
        <taxon>Vibrio</taxon>
    </lineage>
</organism>
<sequence>MEISFYASNIQPYGTPNGTNVANKNGNGIGTPSTASSTGDVSPQKAKGTEHDFSVQAAIEMAESRQELNREEREKMVEQMNEFVSSINKGVAFRVDEESGRDVVTIYEANTGDVIRQFPDEELLVVLRRLAEHTANSGLLVEKV</sequence>
<dbReference type="EMBL" id="AF069392">
    <property type="protein sequence ID" value="AAC27802.1"/>
    <property type="molecule type" value="Genomic_DNA"/>
</dbReference>
<dbReference type="EMBL" id="BA000031">
    <property type="protein sequence ID" value="BAC60520.1"/>
    <property type="molecule type" value="Genomic_DNA"/>
</dbReference>
<dbReference type="RefSeq" id="NP_798636.1">
    <property type="nucleotide sequence ID" value="NC_004603.1"/>
</dbReference>
<dbReference type="RefSeq" id="WP_005481049.1">
    <property type="nucleotide sequence ID" value="NC_004603.1"/>
</dbReference>
<dbReference type="SMR" id="Q56704"/>
<dbReference type="GeneID" id="1189770"/>
<dbReference type="KEGG" id="vpa:VP2257"/>
<dbReference type="PATRIC" id="fig|223926.6.peg.2160"/>
<dbReference type="eggNOG" id="COG1334">
    <property type="taxonomic scope" value="Bacteria"/>
</dbReference>
<dbReference type="HOGENOM" id="CLU_120910_4_1_6"/>
<dbReference type="Proteomes" id="UP000002493">
    <property type="component" value="Chromosome 1"/>
</dbReference>
<dbReference type="Gene3D" id="3.30.160.170">
    <property type="entry name" value="FlaG-like"/>
    <property type="match status" value="1"/>
</dbReference>
<dbReference type="InterPro" id="IPR005186">
    <property type="entry name" value="FlaG"/>
</dbReference>
<dbReference type="InterPro" id="IPR035924">
    <property type="entry name" value="FlaG-like_sf"/>
</dbReference>
<dbReference type="NCBIfam" id="NF006465">
    <property type="entry name" value="PRK08868.1"/>
    <property type="match status" value="1"/>
</dbReference>
<dbReference type="PANTHER" id="PTHR37166">
    <property type="entry name" value="PROTEIN FLAG"/>
    <property type="match status" value="1"/>
</dbReference>
<dbReference type="PANTHER" id="PTHR37166:SF1">
    <property type="entry name" value="PROTEIN FLAG"/>
    <property type="match status" value="1"/>
</dbReference>
<dbReference type="Pfam" id="PF03646">
    <property type="entry name" value="FlaG"/>
    <property type="match status" value="1"/>
</dbReference>
<dbReference type="SUPFAM" id="SSF160214">
    <property type="entry name" value="FlaG-like"/>
    <property type="match status" value="1"/>
</dbReference>